<evidence type="ECO:0000255" key="1">
    <source>
        <dbReference type="HAMAP-Rule" id="MF_00003"/>
    </source>
</evidence>
<accession>Q24UI7</accession>
<name>RBFA_DESHY</name>
<keyword id="KW-0963">Cytoplasm</keyword>
<keyword id="KW-1185">Reference proteome</keyword>
<keyword id="KW-0690">Ribosome biogenesis</keyword>
<feature type="chain" id="PRO_0000321218" description="Ribosome-binding factor A">
    <location>
        <begin position="1"/>
        <end position="125"/>
    </location>
</feature>
<sequence>MAKHRSNRLAETLKQEISQLIREELKDPRIGFVTVTSVEVADDLGNAKVYVSVLGDSQQAKDSLDALKRAAGFVRSEIGKRVRLRHAPEIVFKYDTSIEHGAHIAQLLRGVKQEEEKDEGESHDQ</sequence>
<organism>
    <name type="scientific">Desulfitobacterium hafniense (strain Y51)</name>
    <dbReference type="NCBI Taxonomy" id="138119"/>
    <lineage>
        <taxon>Bacteria</taxon>
        <taxon>Bacillati</taxon>
        <taxon>Bacillota</taxon>
        <taxon>Clostridia</taxon>
        <taxon>Eubacteriales</taxon>
        <taxon>Desulfitobacteriaceae</taxon>
        <taxon>Desulfitobacterium</taxon>
    </lineage>
</organism>
<protein>
    <recommendedName>
        <fullName evidence="1">Ribosome-binding factor A</fullName>
    </recommendedName>
</protein>
<comment type="function">
    <text evidence="1">One of several proteins that assist in the late maturation steps of the functional core of the 30S ribosomal subunit. Associates with free 30S ribosomal subunits (but not with 30S subunits that are part of 70S ribosomes or polysomes). Required for efficient processing of 16S rRNA. May interact with the 5'-terminal helix region of 16S rRNA.</text>
</comment>
<comment type="subunit">
    <text evidence="1">Monomer. Binds 30S ribosomal subunits, but not 50S ribosomal subunits or 70S ribosomes.</text>
</comment>
<comment type="subcellular location">
    <subcellularLocation>
        <location evidence="1">Cytoplasm</location>
    </subcellularLocation>
</comment>
<comment type="similarity">
    <text evidence="1">Belongs to the RbfA family.</text>
</comment>
<proteinExistence type="inferred from homology"/>
<dbReference type="EMBL" id="AP008230">
    <property type="protein sequence ID" value="BAE84305.1"/>
    <property type="molecule type" value="Genomic_DNA"/>
</dbReference>
<dbReference type="RefSeq" id="WP_011460392.1">
    <property type="nucleotide sequence ID" value="NC_007907.1"/>
</dbReference>
<dbReference type="SMR" id="Q24UI7"/>
<dbReference type="STRING" id="138119.DSY2516"/>
<dbReference type="KEGG" id="dsy:DSY2516"/>
<dbReference type="eggNOG" id="COG0858">
    <property type="taxonomic scope" value="Bacteria"/>
</dbReference>
<dbReference type="HOGENOM" id="CLU_089475_6_3_9"/>
<dbReference type="Proteomes" id="UP000001946">
    <property type="component" value="Chromosome"/>
</dbReference>
<dbReference type="GO" id="GO:0005829">
    <property type="term" value="C:cytosol"/>
    <property type="evidence" value="ECO:0007669"/>
    <property type="project" value="TreeGrafter"/>
</dbReference>
<dbReference type="GO" id="GO:0043024">
    <property type="term" value="F:ribosomal small subunit binding"/>
    <property type="evidence" value="ECO:0007669"/>
    <property type="project" value="TreeGrafter"/>
</dbReference>
<dbReference type="GO" id="GO:0030490">
    <property type="term" value="P:maturation of SSU-rRNA"/>
    <property type="evidence" value="ECO:0007669"/>
    <property type="project" value="UniProtKB-UniRule"/>
</dbReference>
<dbReference type="Gene3D" id="3.30.300.20">
    <property type="match status" value="1"/>
</dbReference>
<dbReference type="HAMAP" id="MF_00003">
    <property type="entry name" value="RbfA"/>
    <property type="match status" value="1"/>
</dbReference>
<dbReference type="InterPro" id="IPR015946">
    <property type="entry name" value="KH_dom-like_a/b"/>
</dbReference>
<dbReference type="InterPro" id="IPR000238">
    <property type="entry name" value="RbfA"/>
</dbReference>
<dbReference type="InterPro" id="IPR023799">
    <property type="entry name" value="RbfA_dom_sf"/>
</dbReference>
<dbReference type="InterPro" id="IPR020053">
    <property type="entry name" value="Ribosome-bd_factorA_CS"/>
</dbReference>
<dbReference type="NCBIfam" id="TIGR00082">
    <property type="entry name" value="rbfA"/>
    <property type="match status" value="1"/>
</dbReference>
<dbReference type="PANTHER" id="PTHR33515">
    <property type="entry name" value="RIBOSOME-BINDING FACTOR A, CHLOROPLASTIC-RELATED"/>
    <property type="match status" value="1"/>
</dbReference>
<dbReference type="PANTHER" id="PTHR33515:SF1">
    <property type="entry name" value="RIBOSOME-BINDING FACTOR A, CHLOROPLASTIC-RELATED"/>
    <property type="match status" value="1"/>
</dbReference>
<dbReference type="Pfam" id="PF02033">
    <property type="entry name" value="RBFA"/>
    <property type="match status" value="1"/>
</dbReference>
<dbReference type="SUPFAM" id="SSF89919">
    <property type="entry name" value="Ribosome-binding factor A, RbfA"/>
    <property type="match status" value="1"/>
</dbReference>
<dbReference type="PROSITE" id="PS01319">
    <property type="entry name" value="RBFA"/>
    <property type="match status" value="1"/>
</dbReference>
<reference key="1">
    <citation type="journal article" date="2006" name="J. Bacteriol.">
        <title>Complete genome sequence of the dehalorespiring bacterium Desulfitobacterium hafniense Y51 and comparison with Dehalococcoides ethenogenes 195.</title>
        <authorList>
            <person name="Nonaka H."/>
            <person name="Keresztes G."/>
            <person name="Shinoda Y."/>
            <person name="Ikenaga Y."/>
            <person name="Abe M."/>
            <person name="Naito K."/>
            <person name="Inatomi K."/>
            <person name="Furukawa K."/>
            <person name="Inui M."/>
            <person name="Yukawa H."/>
        </authorList>
    </citation>
    <scope>NUCLEOTIDE SEQUENCE [LARGE SCALE GENOMIC DNA]</scope>
    <source>
        <strain>Y51</strain>
    </source>
</reference>
<gene>
    <name evidence="1" type="primary">rbfA</name>
    <name type="ordered locus">DSY2516</name>
</gene>